<sequence>MELSYQEKLTLIKLNELKKAKFDELVEKTGLDQVAVMRAVLWLQSKGLARLHEKSERIAKLTETGKKYAQIGLPEWRALKVLRKKGKVTLDDLKEVLSEDELKPIVGLLRKEGWASIRKEDGKLVLEITENGLKAEERAIDRALKLLAEKEAIPVSEIEEIIKVNDLKRRKIAEEDIVTERTVEITPEGEELANKGLELKEEVSTLTPELIKSGKWREVEFKRFNIQAPVRRIYPGKKQPYRAFLDKIRRRLIEMGFIEMTVDSLIETQFWNFDALFQPQNHPAREWTDTYQLKYPKSGYLPNKELVERVKTAHERGLAGSRGWGYVWSPERAMLLMPRAHGTALSGRQLAKGVEIPGKYFTIQRVFRPDVLDRTHLIEFNQVDGFVVGEDLNFRHLLGILKRFAVEIAGAKKVKFLPDYYPFTEPSVQMSAYHPELGWVEFGGAGIFREEMTRALGIDVPVIAWGIGIDRLAMFKLGIDDIRYLFSYDLGWLREARLVW</sequence>
<organism>
    <name type="scientific">Thermococcus onnurineus (strain NA1)</name>
    <dbReference type="NCBI Taxonomy" id="523850"/>
    <lineage>
        <taxon>Archaea</taxon>
        <taxon>Methanobacteriati</taxon>
        <taxon>Methanobacteriota</taxon>
        <taxon>Thermococci</taxon>
        <taxon>Thermococcales</taxon>
        <taxon>Thermococcaceae</taxon>
        <taxon>Thermococcus</taxon>
    </lineage>
</organism>
<proteinExistence type="inferred from homology"/>
<comment type="catalytic activity">
    <reaction evidence="1">
        <text>tRNA(Phe) + L-phenylalanine + ATP = L-phenylalanyl-tRNA(Phe) + AMP + diphosphate + H(+)</text>
        <dbReference type="Rhea" id="RHEA:19413"/>
        <dbReference type="Rhea" id="RHEA-COMP:9668"/>
        <dbReference type="Rhea" id="RHEA-COMP:9699"/>
        <dbReference type="ChEBI" id="CHEBI:15378"/>
        <dbReference type="ChEBI" id="CHEBI:30616"/>
        <dbReference type="ChEBI" id="CHEBI:33019"/>
        <dbReference type="ChEBI" id="CHEBI:58095"/>
        <dbReference type="ChEBI" id="CHEBI:78442"/>
        <dbReference type="ChEBI" id="CHEBI:78531"/>
        <dbReference type="ChEBI" id="CHEBI:456215"/>
        <dbReference type="EC" id="6.1.1.20"/>
    </reaction>
</comment>
<comment type="cofactor">
    <cofactor evidence="1">
        <name>Mg(2+)</name>
        <dbReference type="ChEBI" id="CHEBI:18420"/>
    </cofactor>
    <text evidence="1">Binds 2 magnesium ions per tetramer.</text>
</comment>
<comment type="subunit">
    <text evidence="1">Tetramer of two alpha and two beta subunits.</text>
</comment>
<comment type="subcellular location">
    <subcellularLocation>
        <location evidence="1">Cytoplasm</location>
    </subcellularLocation>
</comment>
<comment type="similarity">
    <text evidence="1">Belongs to the class-II aminoacyl-tRNA synthetase family. Phe-tRNA synthetase alpha subunit type 2 subfamily.</text>
</comment>
<name>SYFA_THEON</name>
<evidence type="ECO:0000255" key="1">
    <source>
        <dbReference type="HAMAP-Rule" id="MF_00282"/>
    </source>
</evidence>
<keyword id="KW-0030">Aminoacyl-tRNA synthetase</keyword>
<keyword id="KW-0067">ATP-binding</keyword>
<keyword id="KW-0963">Cytoplasm</keyword>
<keyword id="KW-0436">Ligase</keyword>
<keyword id="KW-0460">Magnesium</keyword>
<keyword id="KW-0479">Metal-binding</keyword>
<keyword id="KW-0547">Nucleotide-binding</keyword>
<keyword id="KW-0648">Protein biosynthesis</keyword>
<gene>
    <name evidence="1" type="primary">pheS</name>
    <name type="ordered locus">TON_0396</name>
</gene>
<dbReference type="EC" id="6.1.1.20" evidence="1"/>
<dbReference type="EMBL" id="CP000855">
    <property type="protein sequence ID" value="ACJ15881.1"/>
    <property type="molecule type" value="Genomic_DNA"/>
</dbReference>
<dbReference type="RefSeq" id="WP_012571353.1">
    <property type="nucleotide sequence ID" value="NC_011529.1"/>
</dbReference>
<dbReference type="SMR" id="B6YTJ4"/>
<dbReference type="STRING" id="523850.TON_0396"/>
<dbReference type="GeneID" id="7016691"/>
<dbReference type="KEGG" id="ton:TON_0396"/>
<dbReference type="PATRIC" id="fig|523850.10.peg.400"/>
<dbReference type="eggNOG" id="arCOG00410">
    <property type="taxonomic scope" value="Archaea"/>
</dbReference>
<dbReference type="HOGENOM" id="CLU_025086_2_2_2"/>
<dbReference type="OrthoDB" id="372178at2157"/>
<dbReference type="Proteomes" id="UP000002727">
    <property type="component" value="Chromosome"/>
</dbReference>
<dbReference type="GO" id="GO:0005737">
    <property type="term" value="C:cytoplasm"/>
    <property type="evidence" value="ECO:0007669"/>
    <property type="project" value="UniProtKB-SubCell"/>
</dbReference>
<dbReference type="GO" id="GO:0005524">
    <property type="term" value="F:ATP binding"/>
    <property type="evidence" value="ECO:0007669"/>
    <property type="project" value="UniProtKB-UniRule"/>
</dbReference>
<dbReference type="GO" id="GO:0000287">
    <property type="term" value="F:magnesium ion binding"/>
    <property type="evidence" value="ECO:0007669"/>
    <property type="project" value="UniProtKB-UniRule"/>
</dbReference>
<dbReference type="GO" id="GO:0004826">
    <property type="term" value="F:phenylalanine-tRNA ligase activity"/>
    <property type="evidence" value="ECO:0007669"/>
    <property type="project" value="UniProtKB-UniRule"/>
</dbReference>
<dbReference type="GO" id="GO:0000049">
    <property type="term" value="F:tRNA binding"/>
    <property type="evidence" value="ECO:0007669"/>
    <property type="project" value="InterPro"/>
</dbReference>
<dbReference type="GO" id="GO:0006432">
    <property type="term" value="P:phenylalanyl-tRNA aminoacylation"/>
    <property type="evidence" value="ECO:0007669"/>
    <property type="project" value="UniProtKB-UniRule"/>
</dbReference>
<dbReference type="CDD" id="cd00496">
    <property type="entry name" value="PheRS_alpha_core"/>
    <property type="match status" value="1"/>
</dbReference>
<dbReference type="FunFam" id="3.30.930.10:FF:000095">
    <property type="entry name" value="Phenylalanine--tRNA ligase alpha subunit"/>
    <property type="match status" value="1"/>
</dbReference>
<dbReference type="Gene3D" id="1.10.10.2320">
    <property type="match status" value="1"/>
</dbReference>
<dbReference type="Gene3D" id="1.10.10.2330">
    <property type="match status" value="1"/>
</dbReference>
<dbReference type="Gene3D" id="3.30.1370.240">
    <property type="match status" value="1"/>
</dbReference>
<dbReference type="Gene3D" id="3.30.930.10">
    <property type="entry name" value="Bira Bifunctional Protein, Domain 2"/>
    <property type="match status" value="1"/>
</dbReference>
<dbReference type="HAMAP" id="MF_00282">
    <property type="entry name" value="Phe_tRNA_synth_alpha2"/>
    <property type="match status" value="1"/>
</dbReference>
<dbReference type="InterPro" id="IPR006195">
    <property type="entry name" value="aa-tRNA-synth_II"/>
</dbReference>
<dbReference type="InterPro" id="IPR045864">
    <property type="entry name" value="aa-tRNA-synth_II/BPL/LPL"/>
</dbReference>
<dbReference type="InterPro" id="IPR004529">
    <property type="entry name" value="Phe-tRNA-synth_IIc_asu"/>
</dbReference>
<dbReference type="InterPro" id="IPR022917">
    <property type="entry name" value="Phe_tRNA_ligase_alpha_bac/arc"/>
</dbReference>
<dbReference type="InterPro" id="IPR002319">
    <property type="entry name" value="Phenylalanyl-tRNA_Synthase"/>
</dbReference>
<dbReference type="InterPro" id="IPR036390">
    <property type="entry name" value="WH_DNA-bd_sf"/>
</dbReference>
<dbReference type="NCBIfam" id="TIGR00468">
    <property type="entry name" value="pheS"/>
    <property type="match status" value="1"/>
</dbReference>
<dbReference type="NCBIfam" id="NF003210">
    <property type="entry name" value="PRK04172.1"/>
    <property type="match status" value="1"/>
</dbReference>
<dbReference type="PANTHER" id="PTHR11538:SF40">
    <property type="entry name" value="PHENYLALANINE--TRNA LIGASE ALPHA SUBUNIT"/>
    <property type="match status" value="1"/>
</dbReference>
<dbReference type="PANTHER" id="PTHR11538">
    <property type="entry name" value="PHENYLALANYL-TRNA SYNTHETASE"/>
    <property type="match status" value="1"/>
</dbReference>
<dbReference type="Pfam" id="PF01409">
    <property type="entry name" value="tRNA-synt_2d"/>
    <property type="match status" value="1"/>
</dbReference>
<dbReference type="SUPFAM" id="SSF55681">
    <property type="entry name" value="Class II aaRS and biotin synthetases"/>
    <property type="match status" value="1"/>
</dbReference>
<dbReference type="SUPFAM" id="SSF46785">
    <property type="entry name" value="Winged helix' DNA-binding domain"/>
    <property type="match status" value="1"/>
</dbReference>
<dbReference type="PROSITE" id="PS50862">
    <property type="entry name" value="AA_TRNA_LIGASE_II"/>
    <property type="match status" value="1"/>
</dbReference>
<protein>
    <recommendedName>
        <fullName evidence="1">Phenylalanine--tRNA ligase alpha subunit</fullName>
        <ecNumber evidence="1">6.1.1.20</ecNumber>
    </recommendedName>
    <alternativeName>
        <fullName evidence="1">Phenylalanyl-tRNA synthetase alpha subunit</fullName>
        <shortName evidence="1">PheRS</shortName>
    </alternativeName>
</protein>
<reference key="1">
    <citation type="journal article" date="2008" name="J. Bacteriol.">
        <title>The complete genome sequence of Thermococcus onnurineus NA1 reveals a mixed heterotrophic and carboxydotrophic metabolism.</title>
        <authorList>
            <person name="Lee H.S."/>
            <person name="Kang S.G."/>
            <person name="Bae S.S."/>
            <person name="Lim J.K."/>
            <person name="Cho Y."/>
            <person name="Kim Y.J."/>
            <person name="Jeon J.H."/>
            <person name="Cha S.-S."/>
            <person name="Kwon K.K."/>
            <person name="Kim H.-T."/>
            <person name="Park C.-J."/>
            <person name="Lee H.-W."/>
            <person name="Kim S.I."/>
            <person name="Chun J."/>
            <person name="Colwell R.R."/>
            <person name="Kim S.-J."/>
            <person name="Lee J.-H."/>
        </authorList>
    </citation>
    <scope>NUCLEOTIDE SEQUENCE [LARGE SCALE GENOMIC DNA]</scope>
    <source>
        <strain>NA1</strain>
    </source>
</reference>
<feature type="chain" id="PRO_1000114936" description="Phenylalanine--tRNA ligase alpha subunit">
    <location>
        <begin position="1"/>
        <end position="500"/>
    </location>
</feature>
<feature type="binding site" evidence="1">
    <location>
        <position position="343"/>
    </location>
    <ligand>
        <name>L-phenylalanine</name>
        <dbReference type="ChEBI" id="CHEBI:58095"/>
    </ligand>
</feature>
<feature type="binding site" evidence="1">
    <location>
        <begin position="382"/>
        <end position="384"/>
    </location>
    <ligand>
        <name>L-phenylalanine</name>
        <dbReference type="ChEBI" id="CHEBI:58095"/>
    </ligand>
</feature>
<feature type="binding site" evidence="1">
    <location>
        <position position="423"/>
    </location>
    <ligand>
        <name>L-phenylalanine</name>
        <dbReference type="ChEBI" id="CHEBI:58095"/>
    </ligand>
</feature>
<feature type="binding site" evidence="1">
    <location>
        <position position="425"/>
    </location>
    <ligand>
        <name>Mg(2+)</name>
        <dbReference type="ChEBI" id="CHEBI:18420"/>
        <note>shared with beta subunit</note>
    </ligand>
</feature>
<feature type="binding site" evidence="1">
    <location>
        <position position="448"/>
    </location>
    <ligand>
        <name>L-phenylalanine</name>
        <dbReference type="ChEBI" id="CHEBI:58095"/>
    </ligand>
</feature>
<accession>B6YTJ4</accession>